<name>ZAS1_SCHPO</name>
<sequence>MSNEESFTEKPLKKRSRAHRLGDPRFYCTYPDCPKSFTRKEHLRRHERTHENVKAFSCSFCNRAFARSDVLNRHVQQMHLQKQNLSERRMLNASCFLGFCVLAHDYVNLINARHFMIEHFLSLFAFCRTILFSLLTSFLLVPPPQFFHSEAGERPTPSVGAPSSLASSMDSVRVAPSMLAASHQIVPQYSENNPRVSNEPPRVTIENASLKPFSGYIKSHMSTSNFLNGEPDLNVNVDLSPFPNLPATVPITQAASTANAFQQPSNQFQTQKLPSGLDTRPVSSYPDELTQLESNPDSFSRLDLQGDCTCIFKNRSSIASSRTMDDVVRWLFSSGKRRQKYESSYPYQTQSNQIPSQDQYSDTDSNFLSYYFSASGPMYVPQKCPATVYNNLLNFLEGSFHLQPNFLAMFTLESVSSWLNAYWSMFHVRWPILHRGTFQITQAPLDLLLSMITLGMHSSNDLSIRSLAVEIHTTLRYNIYQKQEFGPPVSLWVYQALFLIQVFELFTSNLKQHRLAQMFHPVLIEAMRQAIPSDALTVRSETFGESNTPLTLQQWHKWITRESVKRIAFFVFALDSTSTLVFGNQPLLYVTDVSMPLLAEEHHWEAENFEVWAAQKPTIEPPTILHMLKAFVQCEQCESPLPKLSPWNMLLLLHGLLSVDISLKQKKFVPGMKLSKREIDGWCSLVFEAYQKWNRCYYSIFLNNNILPFGHPFVKECRSLYNLACIYSKTRLTYLQAFAKAVTDPVDGSVTSKTVAPLRYVKIWANTENARYSTSNALEILDMLLREKIESAPRYDTLIYHSWCYYVAALVLWSIGFALDEENKKTEEVTNLHSQMSRYVTKVRQALEQGEPLFAVVEKSKNPIILHVVLQALDVFPWDLLGEHKKIIQQLLSKGND</sequence>
<reference key="1">
    <citation type="journal article" date="2000" name="DNA Res.">
        <title>mRNAs encoding zinc finger protein isoforms are expressed by alternative splicing of an in-frame intron in fission yeast.</title>
        <authorList>
            <person name="Okazaki K."/>
            <person name="Niwa O."/>
        </authorList>
    </citation>
    <scope>NUCLEOTIDE SEQUENCE [MRNA] (ISOFORMS 1 AND 2)</scope>
    <source>
        <strain>972 / ATCC 24843</strain>
    </source>
</reference>
<reference key="2">
    <citation type="journal article" date="2002" name="Nature">
        <title>The genome sequence of Schizosaccharomyces pombe.</title>
        <authorList>
            <person name="Wood V."/>
            <person name="Gwilliam R."/>
            <person name="Rajandream M.A."/>
            <person name="Lyne M.H."/>
            <person name="Lyne R."/>
            <person name="Stewart A."/>
            <person name="Sgouros J.G."/>
            <person name="Peat N."/>
            <person name="Hayles J."/>
            <person name="Baker S.G."/>
            <person name="Basham D."/>
            <person name="Bowman S."/>
            <person name="Brooks K."/>
            <person name="Brown D."/>
            <person name="Brown S."/>
            <person name="Chillingworth T."/>
            <person name="Churcher C.M."/>
            <person name="Collins M."/>
            <person name="Connor R."/>
            <person name="Cronin A."/>
            <person name="Davis P."/>
            <person name="Feltwell T."/>
            <person name="Fraser A."/>
            <person name="Gentles S."/>
            <person name="Goble A."/>
            <person name="Hamlin N."/>
            <person name="Harris D.E."/>
            <person name="Hidalgo J."/>
            <person name="Hodgson G."/>
            <person name="Holroyd S."/>
            <person name="Hornsby T."/>
            <person name="Howarth S."/>
            <person name="Huckle E.J."/>
            <person name="Hunt S."/>
            <person name="Jagels K."/>
            <person name="James K.D."/>
            <person name="Jones L."/>
            <person name="Jones M."/>
            <person name="Leather S."/>
            <person name="McDonald S."/>
            <person name="McLean J."/>
            <person name="Mooney P."/>
            <person name="Moule S."/>
            <person name="Mungall K.L."/>
            <person name="Murphy L.D."/>
            <person name="Niblett D."/>
            <person name="Odell C."/>
            <person name="Oliver K."/>
            <person name="O'Neil S."/>
            <person name="Pearson D."/>
            <person name="Quail M.A."/>
            <person name="Rabbinowitsch E."/>
            <person name="Rutherford K.M."/>
            <person name="Rutter S."/>
            <person name="Saunders D."/>
            <person name="Seeger K."/>
            <person name="Sharp S."/>
            <person name="Skelton J."/>
            <person name="Simmonds M.N."/>
            <person name="Squares R."/>
            <person name="Squares S."/>
            <person name="Stevens K."/>
            <person name="Taylor K."/>
            <person name="Taylor R.G."/>
            <person name="Tivey A."/>
            <person name="Walsh S.V."/>
            <person name="Warren T."/>
            <person name="Whitehead S."/>
            <person name="Woodward J.R."/>
            <person name="Volckaert G."/>
            <person name="Aert R."/>
            <person name="Robben J."/>
            <person name="Grymonprez B."/>
            <person name="Weltjens I."/>
            <person name="Vanstreels E."/>
            <person name="Rieger M."/>
            <person name="Schaefer M."/>
            <person name="Mueller-Auer S."/>
            <person name="Gabel C."/>
            <person name="Fuchs M."/>
            <person name="Duesterhoeft A."/>
            <person name="Fritzc C."/>
            <person name="Holzer E."/>
            <person name="Moestl D."/>
            <person name="Hilbert H."/>
            <person name="Borzym K."/>
            <person name="Langer I."/>
            <person name="Beck A."/>
            <person name="Lehrach H."/>
            <person name="Reinhardt R."/>
            <person name="Pohl T.M."/>
            <person name="Eger P."/>
            <person name="Zimmermann W."/>
            <person name="Wedler H."/>
            <person name="Wambutt R."/>
            <person name="Purnelle B."/>
            <person name="Goffeau A."/>
            <person name="Cadieu E."/>
            <person name="Dreano S."/>
            <person name="Gloux S."/>
            <person name="Lelaure V."/>
            <person name="Mottier S."/>
            <person name="Galibert F."/>
            <person name="Aves S.J."/>
            <person name="Xiang Z."/>
            <person name="Hunt C."/>
            <person name="Moore K."/>
            <person name="Hurst S.M."/>
            <person name="Lucas M."/>
            <person name="Rochet M."/>
            <person name="Gaillardin C."/>
            <person name="Tallada V.A."/>
            <person name="Garzon A."/>
            <person name="Thode G."/>
            <person name="Daga R.R."/>
            <person name="Cruzado L."/>
            <person name="Jimenez J."/>
            <person name="Sanchez M."/>
            <person name="del Rey F."/>
            <person name="Benito J."/>
            <person name="Dominguez A."/>
            <person name="Revuelta J.L."/>
            <person name="Moreno S."/>
            <person name="Armstrong J."/>
            <person name="Forsburg S.L."/>
            <person name="Cerutti L."/>
            <person name="Lowe T."/>
            <person name="McCombie W.R."/>
            <person name="Paulsen I."/>
            <person name="Potashkin J."/>
            <person name="Shpakovski G.V."/>
            <person name="Ussery D."/>
            <person name="Barrell B.G."/>
            <person name="Nurse P."/>
        </authorList>
    </citation>
    <scope>NUCLEOTIDE SEQUENCE [LARGE SCALE GENOMIC DNA]</scope>
    <source>
        <strain>972 / ATCC 24843</strain>
    </source>
</reference>
<reference key="3">
    <citation type="journal article" date="2000" name="Genes Cells">
        <title>Large-scale screening of intracellular protein localization in living fission yeast cells by the use of a GFP-fusion genomic DNA library.</title>
        <authorList>
            <person name="Ding D.-Q."/>
            <person name="Tomita Y."/>
            <person name="Yamamoto A."/>
            <person name="Chikashige Y."/>
            <person name="Haraguchi T."/>
            <person name="Hiraoka Y."/>
        </authorList>
    </citation>
    <scope>NUCLEOTIDE SEQUENCE [LARGE SCALE GENOMIC DNA] OF 163-316</scope>
    <scope>SUBCELLULAR LOCATION</scope>
    <source>
        <strain>ATCC 38364 / 968</strain>
    </source>
</reference>
<reference key="4">
    <citation type="journal article" date="2006" name="Nat. Biotechnol.">
        <title>ORFeome cloning and global analysis of protein localization in the fission yeast Schizosaccharomyces pombe.</title>
        <authorList>
            <person name="Matsuyama A."/>
            <person name="Arai R."/>
            <person name="Yashiroda Y."/>
            <person name="Shirai A."/>
            <person name="Kamata A."/>
            <person name="Sekido S."/>
            <person name="Kobayashi Y."/>
            <person name="Hashimoto A."/>
            <person name="Hamamoto M."/>
            <person name="Hiraoka Y."/>
            <person name="Horinouchi S."/>
            <person name="Yoshida M."/>
        </authorList>
    </citation>
    <scope>SUBCELLULAR LOCATION [LARGE SCALE ANALYSIS]</scope>
</reference>
<proteinExistence type="evidence at transcript level"/>
<organism>
    <name type="scientific">Schizosaccharomyces pombe (strain 972 / ATCC 24843)</name>
    <name type="common">Fission yeast</name>
    <dbReference type="NCBI Taxonomy" id="284812"/>
    <lineage>
        <taxon>Eukaryota</taxon>
        <taxon>Fungi</taxon>
        <taxon>Dikarya</taxon>
        <taxon>Ascomycota</taxon>
        <taxon>Taphrinomycotina</taxon>
        <taxon>Schizosaccharomycetes</taxon>
        <taxon>Schizosaccharomycetales</taxon>
        <taxon>Schizosaccharomycetaceae</taxon>
        <taxon>Schizosaccharomyces</taxon>
    </lineage>
</organism>
<gene>
    <name type="primary">zas1</name>
    <name type="ORF">SPBC1198.04c</name>
</gene>
<protein>
    <recommendedName>
        <fullName>Zinc finger protein zas1</fullName>
    </recommendedName>
</protein>
<evidence type="ECO:0000255" key="1">
    <source>
        <dbReference type="PROSITE-ProRule" id="PRU00042"/>
    </source>
</evidence>
<evidence type="ECO:0000269" key="2">
    <source>
    </source>
</evidence>
<evidence type="ECO:0000269" key="3">
    <source>
    </source>
</evidence>
<evidence type="ECO:0000303" key="4">
    <source>
    </source>
</evidence>
<evidence type="ECO:0000305" key="5"/>
<dbReference type="EMBL" id="AF199436">
    <property type="protein sequence ID" value="AAF13703.1"/>
    <property type="molecule type" value="mRNA"/>
</dbReference>
<dbReference type="EMBL" id="AF199437">
    <property type="protein sequence ID" value="AAF13704.1"/>
    <property type="molecule type" value="mRNA"/>
</dbReference>
<dbReference type="EMBL" id="CU329671">
    <property type="protein sequence ID" value="CAB91179.1"/>
    <property type="molecule type" value="Genomic_DNA"/>
</dbReference>
<dbReference type="EMBL" id="AB027804">
    <property type="protein sequence ID" value="BAA87108.1"/>
    <property type="molecule type" value="Genomic_DNA"/>
</dbReference>
<dbReference type="RefSeq" id="NP_595073.1">
    <property type="nucleotide sequence ID" value="NM_001020979.2"/>
</dbReference>
<dbReference type="SMR" id="Q9UTS5"/>
<dbReference type="BioGRID" id="276453">
    <property type="interactions" value="9"/>
</dbReference>
<dbReference type="FunCoup" id="Q9UTS5">
    <property type="interactions" value="7"/>
</dbReference>
<dbReference type="STRING" id="284812.Q9UTS5"/>
<dbReference type="iPTMnet" id="Q9UTS5"/>
<dbReference type="PaxDb" id="4896-SPBC1198.04c.1"/>
<dbReference type="EnsemblFungi" id="SPBC1198.04c.1">
    <molecule id="Q9UTS5-1"/>
    <property type="protein sequence ID" value="SPBC1198.04c.1:pep"/>
    <property type="gene ID" value="SPBC1198.04c"/>
</dbReference>
<dbReference type="KEGG" id="spo:2539907"/>
<dbReference type="PomBase" id="SPBC1198.04c">
    <property type="gene designation" value="zas1"/>
</dbReference>
<dbReference type="VEuPathDB" id="FungiDB:SPBC1198.04c"/>
<dbReference type="eggNOG" id="KOG1721">
    <property type="taxonomic scope" value="Eukaryota"/>
</dbReference>
<dbReference type="HOGENOM" id="CLU_329005_0_0_1"/>
<dbReference type="InParanoid" id="Q9UTS5"/>
<dbReference type="OMA" id="HRPWIMY"/>
<dbReference type="PhylomeDB" id="Q9UTS5"/>
<dbReference type="PRO" id="PR:Q9UTS5"/>
<dbReference type="Proteomes" id="UP000002485">
    <property type="component" value="Chromosome II"/>
</dbReference>
<dbReference type="GO" id="GO:0000785">
    <property type="term" value="C:chromatin"/>
    <property type="evidence" value="ECO:0000318"/>
    <property type="project" value="GO_Central"/>
</dbReference>
<dbReference type="GO" id="GO:0005634">
    <property type="term" value="C:nucleus"/>
    <property type="evidence" value="ECO:0000314"/>
    <property type="project" value="PomBase"/>
</dbReference>
<dbReference type="GO" id="GO:0000981">
    <property type="term" value="F:DNA-binding transcription factor activity, RNA polymerase II-specific"/>
    <property type="evidence" value="ECO:0000269"/>
    <property type="project" value="PomBase"/>
</dbReference>
<dbReference type="GO" id="GO:0000978">
    <property type="term" value="F:RNA polymerase II cis-regulatory region sequence-specific DNA binding"/>
    <property type="evidence" value="ECO:0000318"/>
    <property type="project" value="GO_Central"/>
</dbReference>
<dbReference type="GO" id="GO:0000977">
    <property type="term" value="F:RNA polymerase II transcription regulatory region sequence-specific DNA binding"/>
    <property type="evidence" value="ECO:0000314"/>
    <property type="project" value="PomBase"/>
</dbReference>
<dbReference type="GO" id="GO:0008270">
    <property type="term" value="F:zinc ion binding"/>
    <property type="evidence" value="ECO:0007669"/>
    <property type="project" value="UniProtKB-KW"/>
</dbReference>
<dbReference type="GO" id="GO:0006351">
    <property type="term" value="P:DNA-templated transcription"/>
    <property type="evidence" value="ECO:0007669"/>
    <property type="project" value="InterPro"/>
</dbReference>
<dbReference type="GO" id="GO:0045944">
    <property type="term" value="P:positive regulation of transcription by RNA polymerase II"/>
    <property type="evidence" value="ECO:0000314"/>
    <property type="project" value="PomBase"/>
</dbReference>
<dbReference type="GO" id="GO:0006357">
    <property type="term" value="P:regulation of transcription by RNA polymerase II"/>
    <property type="evidence" value="ECO:0000318"/>
    <property type="project" value="GO_Central"/>
</dbReference>
<dbReference type="CDD" id="cd12148">
    <property type="entry name" value="fungal_TF_MHR"/>
    <property type="match status" value="1"/>
</dbReference>
<dbReference type="FunFam" id="3.30.160.60:FF:000065">
    <property type="entry name" value="B-cell CLL/lymphoma 6, member B"/>
    <property type="match status" value="1"/>
</dbReference>
<dbReference type="Gene3D" id="3.30.160.60">
    <property type="entry name" value="Classic Zinc Finger"/>
    <property type="match status" value="2"/>
</dbReference>
<dbReference type="InterPro" id="IPR007219">
    <property type="entry name" value="Transcription_factor_dom_fun"/>
</dbReference>
<dbReference type="InterPro" id="IPR051059">
    <property type="entry name" value="VerF-like"/>
</dbReference>
<dbReference type="InterPro" id="IPR036236">
    <property type="entry name" value="Znf_C2H2_sf"/>
</dbReference>
<dbReference type="InterPro" id="IPR013087">
    <property type="entry name" value="Znf_C2H2_type"/>
</dbReference>
<dbReference type="PANTHER" id="PTHR40626">
    <property type="entry name" value="MIP31509P"/>
    <property type="match status" value="1"/>
</dbReference>
<dbReference type="PANTHER" id="PTHR40626:SF11">
    <property type="entry name" value="ZINC FINGER PROTEIN YPR022C"/>
    <property type="match status" value="1"/>
</dbReference>
<dbReference type="Pfam" id="PF04082">
    <property type="entry name" value="Fungal_trans"/>
    <property type="match status" value="1"/>
</dbReference>
<dbReference type="Pfam" id="PF00096">
    <property type="entry name" value="zf-C2H2"/>
    <property type="match status" value="2"/>
</dbReference>
<dbReference type="SMART" id="SM00355">
    <property type="entry name" value="ZnF_C2H2"/>
    <property type="match status" value="2"/>
</dbReference>
<dbReference type="SUPFAM" id="SSF57667">
    <property type="entry name" value="beta-beta-alpha zinc fingers"/>
    <property type="match status" value="1"/>
</dbReference>
<dbReference type="PROSITE" id="PS00028">
    <property type="entry name" value="ZINC_FINGER_C2H2_1"/>
    <property type="match status" value="2"/>
</dbReference>
<dbReference type="PROSITE" id="PS50157">
    <property type="entry name" value="ZINC_FINGER_C2H2_2"/>
    <property type="match status" value="2"/>
</dbReference>
<comment type="subcellular location">
    <subcellularLocation>
        <location evidence="2 3">Nucleus</location>
    </subcellularLocation>
</comment>
<comment type="alternative products">
    <event type="alternative splicing"/>
    <isoform>
        <id>Q9UTS5-1</id>
        <name>1</name>
        <name>zas1B</name>
        <sequence type="displayed"/>
    </isoform>
    <isoform>
        <id>Q9UTS5-2</id>
        <name>2</name>
        <name>zas1A</name>
        <sequence type="described" ref="VSP_016913"/>
    </isoform>
</comment>
<comment type="miscellaneous">
    <molecule>Isoform 1</molecule>
    <text>Minor transcript.</text>
</comment>
<comment type="miscellaneous">
    <molecule>Isoform 2</molecule>
    <text evidence="5">Major transcript.</text>
</comment>
<feature type="chain" id="PRO_0000046860" description="Zinc finger protein zas1">
    <location>
        <begin position="1"/>
        <end position="897"/>
    </location>
</feature>
<feature type="zinc finger region" description="C2H2-type 1" evidence="1">
    <location>
        <begin position="26"/>
        <end position="50"/>
    </location>
</feature>
<feature type="zinc finger region" description="C2H2-type 2" evidence="1">
    <location>
        <begin position="56"/>
        <end position="79"/>
    </location>
</feature>
<feature type="zinc finger region" description="C2H2-type 3; atypical" evidence="1">
    <location>
        <begin position="93"/>
        <end position="119"/>
    </location>
</feature>
<feature type="splice variant" id="VSP_016913" description="In isoform 2." evidence="4">
    <original>RMLNASCFLGFCVLAHDYVNLINARHFMIEHFLSLFAFCRTILFSLLTSFLLV</original>
    <variation>L</variation>
    <location>
        <begin position="89"/>
        <end position="141"/>
    </location>
</feature>
<keyword id="KW-0025">Alternative splicing</keyword>
<keyword id="KW-0479">Metal-binding</keyword>
<keyword id="KW-0539">Nucleus</keyword>
<keyword id="KW-1185">Reference proteome</keyword>
<keyword id="KW-0677">Repeat</keyword>
<keyword id="KW-0862">Zinc</keyword>
<keyword id="KW-0863">Zinc-finger</keyword>
<accession>Q9UTS5</accession>
<accession>Q9UTS4</accession>
<accession>Q9UU54</accession>